<name>SQWH_CLOS9</name>
<organism>
    <name type="scientific">Clostridium sp. (strain MSTE9)</name>
    <dbReference type="NCBI Taxonomy" id="1105031"/>
    <lineage>
        <taxon>Bacteria</taxon>
        <taxon>Bacillati</taxon>
        <taxon>Bacillota</taxon>
        <taxon>Clostridia</taxon>
        <taxon>Eubacteriales</taxon>
        <taxon>Clostridiaceae</taxon>
        <taxon>Clostridium</taxon>
    </lineage>
</organism>
<keyword id="KW-0119">Carbohydrate metabolism</keyword>
<keyword id="KW-1185">Reference proteome</keyword>
<keyword id="KW-0786">Thiamine pyrophosphate</keyword>
<keyword id="KW-0808">Transferase</keyword>
<gene>
    <name evidence="3" type="primary">sqwH</name>
    <name evidence="5" type="ORF">HMPREF1141_0616</name>
</gene>
<protein>
    <recommendedName>
        <fullName evidence="4">6-deoxy-6-sulfo-D-fructose transketolase subunit SqwH</fullName>
        <ecNumber evidence="2">2.2.1.15</ecNumber>
    </recommendedName>
</protein>
<comment type="function">
    <text evidence="2">Part of the sulfo-TK pathway, a D-sulfoquinovose degradation pathway that produces 2-hydroxyethane-1-sulfonate (isethionate) (Ref.2). Catalyzes two steps of the pathway: the formation of 4-deoxy-4-sulfoerythrose (SE) and xylulose 5-phosphate from 6-deoxy-6-sulfo-D-fructose (SF) and glyceraldehyde 3-phosphate, and the formation of sulfoacetaldehyde (SA) and xylulose 5-phosphate from 4-deoxy-4-sulfo-D-erythrulose (SEu) and glyceraldehyde 3-phosphate (Ref.2).</text>
</comment>
<comment type="catalytic activity">
    <reaction evidence="2">
        <text>6-deoxy-6-sulfo-D-fructose + D-glyceraldehyde 3-phosphate = 4-deoxy-4-sulfo-D-erythrose + D-xylulose 5-phosphate</text>
        <dbReference type="Rhea" id="RHEA:70803"/>
        <dbReference type="ChEBI" id="CHEBI:57737"/>
        <dbReference type="ChEBI" id="CHEBI:59776"/>
        <dbReference type="ChEBI" id="CHEBI:77133"/>
        <dbReference type="ChEBI" id="CHEBI:189857"/>
        <dbReference type="EC" id="2.2.1.15"/>
    </reaction>
    <physiologicalReaction direction="left-to-right" evidence="2">
        <dbReference type="Rhea" id="RHEA:70804"/>
    </physiologicalReaction>
</comment>
<comment type="catalytic activity">
    <reaction evidence="2">
        <text>4-deoxy-4-sulfo-D-erythrulose + D-glyceraldehyde 3-phosphate = sulfoacetaldehyde + D-xylulose 5-phosphate</text>
        <dbReference type="Rhea" id="RHEA:70811"/>
        <dbReference type="ChEBI" id="CHEBI:57737"/>
        <dbReference type="ChEBI" id="CHEBI:58246"/>
        <dbReference type="ChEBI" id="CHEBI:59776"/>
        <dbReference type="ChEBI" id="CHEBI:190015"/>
        <dbReference type="EC" id="2.2.1.15"/>
    </reaction>
    <physiologicalReaction direction="left-to-right" evidence="2">
        <dbReference type="Rhea" id="RHEA:70812"/>
    </physiologicalReaction>
</comment>
<comment type="cofactor">
    <cofactor evidence="1">
        <name>thiamine diphosphate</name>
        <dbReference type="ChEBI" id="CHEBI:58937"/>
    </cofactor>
</comment>
<comment type="subunit">
    <text evidence="2">Forms a complex with SqwG.</text>
</comment>
<comment type="similarity">
    <text evidence="4">Belongs to the transketolase family.</text>
</comment>
<sequence>MNQPFEVKLEEHWLRDTYVDLLLEYAQKDDRIVALDADLMAASSVKRFSQQMPGRAIDVGVAEANMIGVAAGLAAMGKIPFTHSFTAFASRRVCDQVTLSVAYAGLNVKMVGSDPGITAELNGGTHMSMEDVSIMRNIPGMTVYEPVDSAQLRAAFPQILAHDGPVYIRLLRRPAVRIDSENDEFTLGKASLLREGGDVTILATGIMVAEALLAAEELAGQGIGAEVLNVHTVKPFDEEAVLRSAMKTGAVVTAENASVIGGLGSAAAECLGENCPVPLRRVGVRDCFGEVGLTDYLKEKFGLTAKEIVRAAHEVTERKNFR</sequence>
<reference key="1">
    <citation type="submission" date="2012-05" db="EMBL/GenBank/DDBJ databases">
        <authorList>
            <person name="Harkins D.M."/>
            <person name="Madupu R."/>
            <person name="Durkin A.S."/>
            <person name="Torralba M."/>
            <person name="Methe B."/>
            <person name="Sutton G.G."/>
            <person name="Nelson K.E."/>
        </authorList>
    </citation>
    <scope>NUCLEOTIDE SEQUENCE [LARGE SCALE GENOMIC DNA]</scope>
    <source>
        <strain>MSTE9</strain>
    </source>
</reference>
<reference key="2">
    <citation type="journal article" date="2021" name="ACS Catal.">
        <title>Mechanistically diverse pathways for sulfoquinovose degradation in bacteria.</title>
        <authorList>
            <person name="Liu J."/>
            <person name="Wei Y."/>
            <person name="Ma K."/>
            <person name="An J."/>
            <person name="Liu X."/>
            <person name="Liu Y."/>
            <person name="Ang E.L."/>
            <person name="Zhao H."/>
            <person name="Zhang Y."/>
        </authorList>
    </citation>
    <scope>FUNCTION</scope>
    <scope>CATALYTIC ACTIVITY</scope>
    <scope>SUBUNIT</scope>
    <source>
        <strain>MSTE9</strain>
    </source>
</reference>
<evidence type="ECO:0000250" key="1">
    <source>
        <dbReference type="UniProtKB" id="P29401"/>
    </source>
</evidence>
<evidence type="ECO:0000269" key="2">
    <source ref="2"/>
</evidence>
<evidence type="ECO:0000303" key="3">
    <source ref="2"/>
</evidence>
<evidence type="ECO:0000305" key="4"/>
<evidence type="ECO:0000312" key="5">
    <source>
        <dbReference type="EMBL" id="EJF39090.1"/>
    </source>
</evidence>
<accession>J1H0Z7</accession>
<feature type="chain" id="PRO_0000458938" description="6-deoxy-6-sulfo-D-fructose transketolase subunit SqwH">
    <location>
        <begin position="1"/>
        <end position="322"/>
    </location>
</feature>
<dbReference type="EC" id="2.2.1.15" evidence="2"/>
<dbReference type="EMBL" id="AKFU01000044">
    <property type="protein sequence ID" value="EJF39090.1"/>
    <property type="molecule type" value="Genomic_DNA"/>
</dbReference>
<dbReference type="RefSeq" id="WP_009065220.1">
    <property type="nucleotide sequence ID" value="NZ_AKFU01000044.1"/>
</dbReference>
<dbReference type="SMR" id="J1H0Z7"/>
<dbReference type="STRING" id="1105031.HMPREF1141_0616"/>
<dbReference type="PATRIC" id="fig|1105031.3.peg.2808"/>
<dbReference type="eggNOG" id="COG3958">
    <property type="taxonomic scope" value="Bacteria"/>
</dbReference>
<dbReference type="BioCyc" id="MetaCyc:MONOMER-21956"/>
<dbReference type="Proteomes" id="UP000004073">
    <property type="component" value="Unassembled WGS sequence"/>
</dbReference>
<dbReference type="GO" id="GO:0016740">
    <property type="term" value="F:transferase activity"/>
    <property type="evidence" value="ECO:0007669"/>
    <property type="project" value="UniProtKB-KW"/>
</dbReference>
<dbReference type="CDD" id="cd07033">
    <property type="entry name" value="TPP_PYR_DXS_TK_like"/>
    <property type="match status" value="1"/>
</dbReference>
<dbReference type="FunFam" id="3.40.50.970:FF:000129">
    <property type="entry name" value="Transketolase"/>
    <property type="match status" value="1"/>
</dbReference>
<dbReference type="Gene3D" id="3.40.50.920">
    <property type="match status" value="1"/>
</dbReference>
<dbReference type="Gene3D" id="3.40.50.970">
    <property type="match status" value="1"/>
</dbReference>
<dbReference type="InterPro" id="IPR051157">
    <property type="entry name" value="PDH/Transketolase"/>
</dbReference>
<dbReference type="InterPro" id="IPR029061">
    <property type="entry name" value="THDP-binding"/>
</dbReference>
<dbReference type="InterPro" id="IPR009014">
    <property type="entry name" value="Transketo_C/PFOR_II"/>
</dbReference>
<dbReference type="InterPro" id="IPR005475">
    <property type="entry name" value="Transketolase-like_Pyr-bd"/>
</dbReference>
<dbReference type="InterPro" id="IPR033248">
    <property type="entry name" value="Transketolase_C"/>
</dbReference>
<dbReference type="PANTHER" id="PTHR43825">
    <property type="entry name" value="PYRUVATE DEHYDROGENASE E1 COMPONENT"/>
    <property type="match status" value="1"/>
</dbReference>
<dbReference type="PANTHER" id="PTHR43825:SF1">
    <property type="entry name" value="TRANSKETOLASE-LIKE PYRIMIDINE-BINDING DOMAIN-CONTAINING PROTEIN"/>
    <property type="match status" value="1"/>
</dbReference>
<dbReference type="Pfam" id="PF02779">
    <property type="entry name" value="Transket_pyr"/>
    <property type="match status" value="1"/>
</dbReference>
<dbReference type="Pfam" id="PF02780">
    <property type="entry name" value="Transketolase_C"/>
    <property type="match status" value="1"/>
</dbReference>
<dbReference type="SMART" id="SM00861">
    <property type="entry name" value="Transket_pyr"/>
    <property type="match status" value="1"/>
</dbReference>
<dbReference type="SUPFAM" id="SSF52518">
    <property type="entry name" value="Thiamin diphosphate-binding fold (THDP-binding)"/>
    <property type="match status" value="1"/>
</dbReference>
<dbReference type="SUPFAM" id="SSF52922">
    <property type="entry name" value="TK C-terminal domain-like"/>
    <property type="match status" value="1"/>
</dbReference>
<proteinExistence type="evidence at protein level"/>